<gene>
    <name type="primary">Rnft2</name>
    <name type="synonym">Tmem118</name>
</gene>
<sequence length="445" mass="48856">MWLLAAHQVLRKMQRRHSSNTDNIPPERSRSQALSPEASVDEGGVFESLKAETASPPALFSGLAGGLPASPFPAGLVLGSTAGGGDVFIPMPATRDEAGGRSAEGSTYHHRQAHHHFHHGAHRGGSLLQHVGGDHRGHSEEGVDEQPGTPAPALSELKAVISWLQKGLPFILILLAKLCFQHKLGIAVCIGMASTFAYANSTLREQVSLKEKRSVLVILWILAFLAGNTMYVLYTFSSQQLYSSLIFLKPNLETLDFFDLLWIVGIADFVLKYITIALKCLIVALPKIILAVKSKGKFYLVIEELSQLFRSLVPIQLWYKYIMGDDSSNSYFLGGVLIVLYSLCKSFDICGRVGGLRKALKLLCTSQNYGVRATGQQCTEAGAVCAICQAEFRDPMILLCQHVFCEECLCLWLDRERTCPLCRSVAVDTLRCWKDGATSAHLQVY</sequence>
<proteinExistence type="evidence at transcript level"/>
<keyword id="KW-0025">Alternative splicing</keyword>
<keyword id="KW-0472">Membrane</keyword>
<keyword id="KW-0479">Metal-binding</keyword>
<keyword id="KW-1185">Reference proteome</keyword>
<keyword id="KW-0812">Transmembrane</keyword>
<keyword id="KW-1133">Transmembrane helix</keyword>
<keyword id="KW-0833">Ubl conjugation pathway</keyword>
<keyword id="KW-0862">Zinc</keyword>
<keyword id="KW-0863">Zinc-finger</keyword>
<evidence type="ECO:0000255" key="1"/>
<evidence type="ECO:0000255" key="2">
    <source>
        <dbReference type="PROSITE-ProRule" id="PRU00175"/>
    </source>
</evidence>
<evidence type="ECO:0000256" key="3">
    <source>
        <dbReference type="SAM" id="MobiDB-lite"/>
    </source>
</evidence>
<evidence type="ECO:0000269" key="4">
    <source>
    </source>
</evidence>
<evidence type="ECO:0000303" key="5">
    <source>
    </source>
</evidence>
<evidence type="ECO:0000305" key="6"/>
<reference key="1">
    <citation type="journal article" date="2005" name="Science">
        <title>The transcriptional landscape of the mammalian genome.</title>
        <authorList>
            <person name="Carninci P."/>
            <person name="Kasukawa T."/>
            <person name="Katayama S."/>
            <person name="Gough J."/>
            <person name="Frith M.C."/>
            <person name="Maeda N."/>
            <person name="Oyama R."/>
            <person name="Ravasi T."/>
            <person name="Lenhard B."/>
            <person name="Wells C."/>
            <person name="Kodzius R."/>
            <person name="Shimokawa K."/>
            <person name="Bajic V.B."/>
            <person name="Brenner S.E."/>
            <person name="Batalov S."/>
            <person name="Forrest A.R."/>
            <person name="Zavolan M."/>
            <person name="Davis M.J."/>
            <person name="Wilming L.G."/>
            <person name="Aidinis V."/>
            <person name="Allen J.E."/>
            <person name="Ambesi-Impiombato A."/>
            <person name="Apweiler R."/>
            <person name="Aturaliya R.N."/>
            <person name="Bailey T.L."/>
            <person name="Bansal M."/>
            <person name="Baxter L."/>
            <person name="Beisel K.W."/>
            <person name="Bersano T."/>
            <person name="Bono H."/>
            <person name="Chalk A.M."/>
            <person name="Chiu K.P."/>
            <person name="Choudhary V."/>
            <person name="Christoffels A."/>
            <person name="Clutterbuck D.R."/>
            <person name="Crowe M.L."/>
            <person name="Dalla E."/>
            <person name="Dalrymple B.P."/>
            <person name="de Bono B."/>
            <person name="Della Gatta G."/>
            <person name="di Bernardo D."/>
            <person name="Down T."/>
            <person name="Engstrom P."/>
            <person name="Fagiolini M."/>
            <person name="Faulkner G."/>
            <person name="Fletcher C.F."/>
            <person name="Fukushima T."/>
            <person name="Furuno M."/>
            <person name="Futaki S."/>
            <person name="Gariboldi M."/>
            <person name="Georgii-Hemming P."/>
            <person name="Gingeras T.R."/>
            <person name="Gojobori T."/>
            <person name="Green R.E."/>
            <person name="Gustincich S."/>
            <person name="Harbers M."/>
            <person name="Hayashi Y."/>
            <person name="Hensch T.K."/>
            <person name="Hirokawa N."/>
            <person name="Hill D."/>
            <person name="Huminiecki L."/>
            <person name="Iacono M."/>
            <person name="Ikeo K."/>
            <person name="Iwama A."/>
            <person name="Ishikawa T."/>
            <person name="Jakt M."/>
            <person name="Kanapin A."/>
            <person name="Katoh M."/>
            <person name="Kawasawa Y."/>
            <person name="Kelso J."/>
            <person name="Kitamura H."/>
            <person name="Kitano H."/>
            <person name="Kollias G."/>
            <person name="Krishnan S.P."/>
            <person name="Kruger A."/>
            <person name="Kummerfeld S.K."/>
            <person name="Kurochkin I.V."/>
            <person name="Lareau L.F."/>
            <person name="Lazarevic D."/>
            <person name="Lipovich L."/>
            <person name="Liu J."/>
            <person name="Liuni S."/>
            <person name="McWilliam S."/>
            <person name="Madan Babu M."/>
            <person name="Madera M."/>
            <person name="Marchionni L."/>
            <person name="Matsuda H."/>
            <person name="Matsuzawa S."/>
            <person name="Miki H."/>
            <person name="Mignone F."/>
            <person name="Miyake S."/>
            <person name="Morris K."/>
            <person name="Mottagui-Tabar S."/>
            <person name="Mulder N."/>
            <person name="Nakano N."/>
            <person name="Nakauchi H."/>
            <person name="Ng P."/>
            <person name="Nilsson R."/>
            <person name="Nishiguchi S."/>
            <person name="Nishikawa S."/>
            <person name="Nori F."/>
            <person name="Ohara O."/>
            <person name="Okazaki Y."/>
            <person name="Orlando V."/>
            <person name="Pang K.C."/>
            <person name="Pavan W.J."/>
            <person name="Pavesi G."/>
            <person name="Pesole G."/>
            <person name="Petrovsky N."/>
            <person name="Piazza S."/>
            <person name="Reed J."/>
            <person name="Reid J.F."/>
            <person name="Ring B.Z."/>
            <person name="Ringwald M."/>
            <person name="Rost B."/>
            <person name="Ruan Y."/>
            <person name="Salzberg S.L."/>
            <person name="Sandelin A."/>
            <person name="Schneider C."/>
            <person name="Schoenbach C."/>
            <person name="Sekiguchi K."/>
            <person name="Semple C.A."/>
            <person name="Seno S."/>
            <person name="Sessa L."/>
            <person name="Sheng Y."/>
            <person name="Shibata Y."/>
            <person name="Shimada H."/>
            <person name="Shimada K."/>
            <person name="Silva D."/>
            <person name="Sinclair B."/>
            <person name="Sperling S."/>
            <person name="Stupka E."/>
            <person name="Sugiura K."/>
            <person name="Sultana R."/>
            <person name="Takenaka Y."/>
            <person name="Taki K."/>
            <person name="Tammoja K."/>
            <person name="Tan S.L."/>
            <person name="Tang S."/>
            <person name="Taylor M.S."/>
            <person name="Tegner J."/>
            <person name="Teichmann S.A."/>
            <person name="Ueda H.R."/>
            <person name="van Nimwegen E."/>
            <person name="Verardo R."/>
            <person name="Wei C.L."/>
            <person name="Yagi K."/>
            <person name="Yamanishi H."/>
            <person name="Zabarovsky E."/>
            <person name="Zhu S."/>
            <person name="Zimmer A."/>
            <person name="Hide W."/>
            <person name="Bult C."/>
            <person name="Grimmond S.M."/>
            <person name="Teasdale R.D."/>
            <person name="Liu E.T."/>
            <person name="Brusic V."/>
            <person name="Quackenbush J."/>
            <person name="Wahlestedt C."/>
            <person name="Mattick J.S."/>
            <person name="Hume D.A."/>
            <person name="Kai C."/>
            <person name="Sasaki D."/>
            <person name="Tomaru Y."/>
            <person name="Fukuda S."/>
            <person name="Kanamori-Katayama M."/>
            <person name="Suzuki M."/>
            <person name="Aoki J."/>
            <person name="Arakawa T."/>
            <person name="Iida J."/>
            <person name="Imamura K."/>
            <person name="Itoh M."/>
            <person name="Kato T."/>
            <person name="Kawaji H."/>
            <person name="Kawagashira N."/>
            <person name="Kawashima T."/>
            <person name="Kojima M."/>
            <person name="Kondo S."/>
            <person name="Konno H."/>
            <person name="Nakano K."/>
            <person name="Ninomiya N."/>
            <person name="Nishio T."/>
            <person name="Okada M."/>
            <person name="Plessy C."/>
            <person name="Shibata K."/>
            <person name="Shiraki T."/>
            <person name="Suzuki S."/>
            <person name="Tagami M."/>
            <person name="Waki K."/>
            <person name="Watahiki A."/>
            <person name="Okamura-Oho Y."/>
            <person name="Suzuki H."/>
            <person name="Kawai J."/>
            <person name="Hayashizaki Y."/>
        </authorList>
    </citation>
    <scope>NUCLEOTIDE SEQUENCE [LARGE SCALE MRNA] (ISOFORMS 1 AND 2)</scope>
    <source>
        <strain>C57BL/6J</strain>
        <tissue>Medulla oblongata</tissue>
        <tissue>Sympathetic ganglion</tissue>
    </source>
</reference>
<reference key="2">
    <citation type="journal article" date="2004" name="Genome Res.">
        <title>The status, quality, and expansion of the NIH full-length cDNA project: the Mammalian Gene Collection (MGC).</title>
        <authorList>
            <consortium name="The MGC Project Team"/>
        </authorList>
    </citation>
    <scope>NUCLEOTIDE SEQUENCE [LARGE SCALE MRNA] (ISOFORM 1)</scope>
    <source>
        <strain>C57BL/6J</strain>
        <tissue>Brain</tissue>
    </source>
</reference>
<reference key="3">
    <citation type="journal article" date="2020" name="JCI Insight">
        <title>The RNFT2/IL-3Ralpha axis regulates IL-3 signaling and innate immunity.</title>
        <authorList>
            <person name="Tong Y."/>
            <person name="Lear T.B."/>
            <person name="Evankovich J."/>
            <person name="Chen Y."/>
            <person name="Londino J.D."/>
            <person name="Myerburg M.M."/>
            <person name="Zhang Y."/>
            <person name="Popescu I.D."/>
            <person name="McDyer J.F."/>
            <person name="McVerry B.J."/>
            <person name="Lockwood K.C."/>
            <person name="Jurczak M.J."/>
            <person name="Liu Y."/>
            <person name="Chen B.B."/>
        </authorList>
    </citation>
    <scope>FUNCTION</scope>
    <scope>INDUCTION BY IL3 AND LPS</scope>
</reference>
<accession>Q3UF64</accession>
<accession>Q8BXI9</accession>
<comment type="function">
    <text evidence="4">E3 ubiquitin-protein ligase that negatively regulates IL3-dependent cellular responses through IL3RA ubiquitination and degradation by the proteasome, having an anti-inflammatory effect.</text>
</comment>
<comment type="subcellular location">
    <subcellularLocation>
        <location evidence="6">Membrane</location>
        <topology evidence="6">Multi-pass membrane protein</topology>
    </subcellularLocation>
</comment>
<comment type="alternative products">
    <event type="alternative splicing"/>
    <isoform>
        <id>Q3UF64-1</id>
        <name>1</name>
        <sequence type="displayed"/>
    </isoform>
    <isoform>
        <id>Q3UF64-2</id>
        <name>2</name>
        <sequence type="described" ref="VSP_023467"/>
    </isoform>
</comment>
<comment type="induction">
    <text evidence="4">Expression is induced by IL3 and inhibited by LPS.</text>
</comment>
<comment type="sequence caution" evidence="6">
    <conflict type="erroneous initiation">
        <sequence resource="EMBL-CDS" id="AAH57302"/>
    </conflict>
    <text>Truncated N-terminus.</text>
</comment>
<comment type="sequence caution" evidence="6">
    <conflict type="erroneous initiation">
        <sequence resource="EMBL-CDS" id="BAC32896"/>
    </conflict>
    <text>Truncated N-terminus.</text>
</comment>
<comment type="sequence caution" evidence="6">
    <conflict type="frameshift">
        <sequence resource="EMBL-CDS" id="BAE28697"/>
    </conflict>
</comment>
<dbReference type="EMBL" id="AK046850">
    <property type="protein sequence ID" value="BAC32896.1"/>
    <property type="status" value="ALT_INIT"/>
    <property type="molecule type" value="mRNA"/>
</dbReference>
<dbReference type="EMBL" id="AK148930">
    <property type="protein sequence ID" value="BAE28697.1"/>
    <property type="status" value="ALT_FRAME"/>
    <property type="molecule type" value="mRNA"/>
</dbReference>
<dbReference type="EMBL" id="BC057302">
    <property type="protein sequence ID" value="AAH57302.1"/>
    <property type="status" value="ALT_INIT"/>
    <property type="molecule type" value="mRNA"/>
</dbReference>
<dbReference type="CCDS" id="CCDS19611.2">
    <molecule id="Q3UF64-2"/>
</dbReference>
<dbReference type="CCDS" id="CCDS51632.1">
    <molecule id="Q3UF64-1"/>
</dbReference>
<dbReference type="RefSeq" id="NP_001103372.1">
    <molecule id="Q3UF64-1"/>
    <property type="nucleotide sequence ID" value="NM_001109902.1"/>
</dbReference>
<dbReference type="RefSeq" id="NP_766586.2">
    <molecule id="Q3UF64-2"/>
    <property type="nucleotide sequence ID" value="NM_172998.3"/>
</dbReference>
<dbReference type="RefSeq" id="XP_006530407.1">
    <molecule id="Q3UF64-2"/>
    <property type="nucleotide sequence ID" value="XM_006530344.3"/>
</dbReference>
<dbReference type="RefSeq" id="XP_006530408.1">
    <molecule id="Q3UF64-2"/>
    <property type="nucleotide sequence ID" value="XM_006530345.2"/>
</dbReference>
<dbReference type="RefSeq" id="XP_006530409.1">
    <molecule id="Q3UF64-2"/>
    <property type="nucleotide sequence ID" value="XM_006530346.5"/>
</dbReference>
<dbReference type="RefSeq" id="XP_006530410.1">
    <molecule id="Q3UF64-2"/>
    <property type="nucleotide sequence ID" value="XM_006530347.3"/>
</dbReference>
<dbReference type="RefSeq" id="XP_006530411.1">
    <molecule id="Q3UF64-2"/>
    <property type="nucleotide sequence ID" value="XM_006530348.2"/>
</dbReference>
<dbReference type="RefSeq" id="XP_006530412.1">
    <molecule id="Q3UF64-1"/>
    <property type="nucleotide sequence ID" value="XM_006530349.2"/>
</dbReference>
<dbReference type="RefSeq" id="XP_017176390.1">
    <molecule id="Q3UF64-1"/>
    <property type="nucleotide sequence ID" value="XM_017320901.2"/>
</dbReference>
<dbReference type="RefSeq" id="XP_030110397.1">
    <molecule id="Q3UF64-1"/>
    <property type="nucleotide sequence ID" value="XM_030254537.1"/>
</dbReference>
<dbReference type="RefSeq" id="XP_036021044.1">
    <molecule id="Q3UF64-1"/>
    <property type="nucleotide sequence ID" value="XM_036165151.1"/>
</dbReference>
<dbReference type="FunCoup" id="Q3UF64">
    <property type="interactions" value="125"/>
</dbReference>
<dbReference type="STRING" id="10090.ENSMUSP00000112903"/>
<dbReference type="iPTMnet" id="Q3UF64"/>
<dbReference type="PhosphoSitePlus" id="Q3UF64"/>
<dbReference type="SwissPalm" id="Q3UF64"/>
<dbReference type="PaxDb" id="10090-ENSMUSP00000112903"/>
<dbReference type="ProteomicsDB" id="300427">
    <molecule id="Q3UF64-1"/>
</dbReference>
<dbReference type="ProteomicsDB" id="300428">
    <molecule id="Q3UF64-2"/>
</dbReference>
<dbReference type="Antibodypedia" id="31315">
    <property type="antibodies" value="34 antibodies from 16 providers"/>
</dbReference>
<dbReference type="DNASU" id="269695"/>
<dbReference type="Ensembl" id="ENSMUST00000117177.8">
    <molecule id="Q3UF64-2"/>
    <property type="protein sequence ID" value="ENSMUSP00000112903.2"/>
    <property type="gene ID" value="ENSMUSG00000032850.17"/>
</dbReference>
<dbReference type="Ensembl" id="ENSMUST00000121369.8">
    <molecule id="Q3UF64-1"/>
    <property type="protein sequence ID" value="ENSMUSP00000113749.2"/>
    <property type="gene ID" value="ENSMUSG00000032850.17"/>
</dbReference>
<dbReference type="GeneID" id="269695"/>
<dbReference type="KEGG" id="mmu:269695"/>
<dbReference type="UCSC" id="uc008zgh.2">
    <molecule id="Q3UF64-2"/>
    <property type="organism name" value="mouse"/>
</dbReference>
<dbReference type="UCSC" id="uc012ecl.1">
    <molecule id="Q3UF64-1"/>
    <property type="organism name" value="mouse"/>
</dbReference>
<dbReference type="AGR" id="MGI:2442859"/>
<dbReference type="CTD" id="84900"/>
<dbReference type="MGI" id="MGI:2442859">
    <property type="gene designation" value="Rnft2"/>
</dbReference>
<dbReference type="VEuPathDB" id="HostDB:ENSMUSG00000032850"/>
<dbReference type="eggNOG" id="KOG4638">
    <property type="taxonomic scope" value="Eukaryota"/>
</dbReference>
<dbReference type="GeneTree" id="ENSGT00940000158419"/>
<dbReference type="HOGENOM" id="CLU_039460_2_0_1"/>
<dbReference type="InParanoid" id="Q3UF64"/>
<dbReference type="OMA" id="HHRQPPH"/>
<dbReference type="OrthoDB" id="34610at9989"/>
<dbReference type="PhylomeDB" id="Q3UF64"/>
<dbReference type="TreeFam" id="TF331930"/>
<dbReference type="BioGRID-ORCS" id="269695">
    <property type="hits" value="4 hits in 80 CRISPR screens"/>
</dbReference>
<dbReference type="ChiTaRS" id="Rnft2">
    <property type="organism name" value="mouse"/>
</dbReference>
<dbReference type="PRO" id="PR:Q3UF64"/>
<dbReference type="Proteomes" id="UP000000589">
    <property type="component" value="Chromosome 5"/>
</dbReference>
<dbReference type="RNAct" id="Q3UF64">
    <property type="molecule type" value="protein"/>
</dbReference>
<dbReference type="Bgee" id="ENSMUSG00000032850">
    <property type="expression patterns" value="Expressed in embryonic brain and 130 other cell types or tissues"/>
</dbReference>
<dbReference type="ExpressionAtlas" id="Q3UF64">
    <property type="expression patterns" value="baseline and differential"/>
</dbReference>
<dbReference type="GO" id="GO:0016020">
    <property type="term" value="C:membrane"/>
    <property type="evidence" value="ECO:0007669"/>
    <property type="project" value="UniProtKB-SubCell"/>
</dbReference>
<dbReference type="GO" id="GO:0061630">
    <property type="term" value="F:ubiquitin protein ligase activity"/>
    <property type="evidence" value="ECO:0007669"/>
    <property type="project" value="InterPro"/>
</dbReference>
<dbReference type="GO" id="GO:0008270">
    <property type="term" value="F:zinc ion binding"/>
    <property type="evidence" value="ECO:0007669"/>
    <property type="project" value="UniProtKB-KW"/>
</dbReference>
<dbReference type="GO" id="GO:1904294">
    <property type="term" value="P:positive regulation of ERAD pathway"/>
    <property type="evidence" value="ECO:0007669"/>
    <property type="project" value="InterPro"/>
</dbReference>
<dbReference type="CDD" id="cd16742">
    <property type="entry name" value="RING-HC_RNFT2"/>
    <property type="match status" value="1"/>
</dbReference>
<dbReference type="Gene3D" id="3.30.40.10">
    <property type="entry name" value="Zinc/RING finger domain, C3HC4 (zinc finger)"/>
    <property type="match status" value="1"/>
</dbReference>
<dbReference type="InterPro" id="IPR044235">
    <property type="entry name" value="RNFT1/2"/>
</dbReference>
<dbReference type="InterPro" id="IPR001841">
    <property type="entry name" value="Znf_RING"/>
</dbReference>
<dbReference type="InterPro" id="IPR013083">
    <property type="entry name" value="Znf_RING/FYVE/PHD"/>
</dbReference>
<dbReference type="InterPro" id="IPR017907">
    <property type="entry name" value="Znf_RING_CS"/>
</dbReference>
<dbReference type="PANTHER" id="PTHR15860:SF2">
    <property type="entry name" value="RING FINGER AND TRANSMEMBRANE DOMAIN-CONTAINING PROTEIN 2"/>
    <property type="match status" value="1"/>
</dbReference>
<dbReference type="PANTHER" id="PTHR15860">
    <property type="entry name" value="UNCHARACTERIZED RING FINGER-CONTAINING PROTEIN"/>
    <property type="match status" value="1"/>
</dbReference>
<dbReference type="Pfam" id="PF13923">
    <property type="entry name" value="zf-C3HC4_2"/>
    <property type="match status" value="1"/>
</dbReference>
<dbReference type="SMART" id="SM00184">
    <property type="entry name" value="RING"/>
    <property type="match status" value="1"/>
</dbReference>
<dbReference type="SUPFAM" id="SSF57850">
    <property type="entry name" value="RING/U-box"/>
    <property type="match status" value="1"/>
</dbReference>
<dbReference type="PROSITE" id="PS00518">
    <property type="entry name" value="ZF_RING_1"/>
    <property type="match status" value="1"/>
</dbReference>
<dbReference type="PROSITE" id="PS50089">
    <property type="entry name" value="ZF_RING_2"/>
    <property type="match status" value="1"/>
</dbReference>
<name>RNFT2_MOUSE</name>
<organism>
    <name type="scientific">Mus musculus</name>
    <name type="common">Mouse</name>
    <dbReference type="NCBI Taxonomy" id="10090"/>
    <lineage>
        <taxon>Eukaryota</taxon>
        <taxon>Metazoa</taxon>
        <taxon>Chordata</taxon>
        <taxon>Craniata</taxon>
        <taxon>Vertebrata</taxon>
        <taxon>Euteleostomi</taxon>
        <taxon>Mammalia</taxon>
        <taxon>Eutheria</taxon>
        <taxon>Euarchontoglires</taxon>
        <taxon>Glires</taxon>
        <taxon>Rodentia</taxon>
        <taxon>Myomorpha</taxon>
        <taxon>Muroidea</taxon>
        <taxon>Muridae</taxon>
        <taxon>Murinae</taxon>
        <taxon>Mus</taxon>
        <taxon>Mus</taxon>
    </lineage>
</organism>
<feature type="chain" id="PRO_0000279509" description="RING finger and transmembrane domain-containing protein 2">
    <location>
        <begin position="1"/>
        <end position="445"/>
    </location>
</feature>
<feature type="topological domain" description="Extracellular" evidence="1">
    <location>
        <begin position="1"/>
        <end position="183"/>
    </location>
</feature>
<feature type="transmembrane region" description="Helical" evidence="1">
    <location>
        <begin position="184"/>
        <end position="203"/>
    </location>
</feature>
<feature type="topological domain" description="Cytoplasmic" evidence="1">
    <location>
        <begin position="204"/>
        <end position="215"/>
    </location>
</feature>
<feature type="transmembrane region" description="Helical" evidence="1">
    <location>
        <begin position="216"/>
        <end position="236"/>
    </location>
</feature>
<feature type="topological domain" description="Extracellular" evidence="1">
    <location>
        <begin position="237"/>
        <end position="256"/>
    </location>
</feature>
<feature type="transmembrane region" description="Helical" evidence="1">
    <location>
        <begin position="257"/>
        <end position="277"/>
    </location>
</feature>
<feature type="topological domain" description="Cytoplasmic" evidence="1">
    <location>
        <begin position="278"/>
        <end position="330"/>
    </location>
</feature>
<feature type="transmembrane region" description="Helical" evidence="1">
    <location>
        <begin position="331"/>
        <end position="351"/>
    </location>
</feature>
<feature type="topological domain" description="Extracellular" evidence="1">
    <location>
        <begin position="352"/>
        <end position="445"/>
    </location>
</feature>
<feature type="zinc finger region" description="RING-type" evidence="2">
    <location>
        <begin position="385"/>
        <end position="423"/>
    </location>
</feature>
<feature type="region of interest" description="Disordered" evidence="3">
    <location>
        <begin position="12"/>
        <end position="41"/>
    </location>
</feature>
<feature type="splice variant" id="VSP_023467" description="In isoform 2." evidence="5">
    <original>E</original>
    <variation>ES</variation>
    <location>
        <position position="27"/>
    </location>
</feature>
<feature type="sequence conflict" description="In Ref. 1; BAE28697." evidence="6" ref="1">
    <original>P</original>
    <variation>H</variation>
    <location>
        <position position="147"/>
    </location>
</feature>
<protein>
    <recommendedName>
        <fullName>RING finger and transmembrane domain-containing protein 2</fullName>
    </recommendedName>
    <alternativeName>
        <fullName>Transmembrane protein 118</fullName>
    </alternativeName>
</protein>